<comment type="function">
    <text evidence="1">Involved in the biosynthesis of the chorismate, which leads to the biosynthesis of aromatic amino acids. Catalyzes the reversible NADPH linked reduction of 3-dehydroshikimate (DHSA) to yield shikimate (SA).</text>
</comment>
<comment type="catalytic activity">
    <reaction evidence="1">
        <text>shikimate + NADP(+) = 3-dehydroshikimate + NADPH + H(+)</text>
        <dbReference type="Rhea" id="RHEA:17737"/>
        <dbReference type="ChEBI" id="CHEBI:15378"/>
        <dbReference type="ChEBI" id="CHEBI:16630"/>
        <dbReference type="ChEBI" id="CHEBI:36208"/>
        <dbReference type="ChEBI" id="CHEBI:57783"/>
        <dbReference type="ChEBI" id="CHEBI:58349"/>
        <dbReference type="EC" id="1.1.1.25"/>
    </reaction>
</comment>
<comment type="pathway">
    <text evidence="1">Metabolic intermediate biosynthesis; chorismate biosynthesis; chorismate from D-erythrose 4-phosphate and phosphoenolpyruvate: step 4/7.</text>
</comment>
<comment type="subunit">
    <text evidence="1">Homodimer.</text>
</comment>
<comment type="similarity">
    <text evidence="1">Belongs to the shikimate dehydrogenase family.</text>
</comment>
<reference key="1">
    <citation type="journal article" date="1997" name="Mol. Microbiol.">
        <title>Interspecies recombination, and phylogenetic distortions, within the glutamine synthetase and shikimate dehydrogenase genes of Neisseria meningitidis and commensal Neisseria species.</title>
        <authorList>
            <person name="Zhou J."/>
            <person name="Bowler L.D."/>
            <person name="Spratt B.G."/>
        </authorList>
    </citation>
    <scope>NUCLEOTIDE SEQUENCE [GENOMIC DNA]</scope>
    <source>
        <strain>LNP 1646</strain>
    </source>
</reference>
<gene>
    <name evidence="1" type="primary">aroE</name>
</gene>
<proteinExistence type="inferred from homology"/>
<organism>
    <name type="scientific">Neisseria cinerea</name>
    <dbReference type="NCBI Taxonomy" id="483"/>
    <lineage>
        <taxon>Bacteria</taxon>
        <taxon>Pseudomonadati</taxon>
        <taxon>Pseudomonadota</taxon>
        <taxon>Betaproteobacteria</taxon>
        <taxon>Neisseriales</taxon>
        <taxon>Neisseriaceae</taxon>
        <taxon>Neisseria</taxon>
    </lineage>
</organism>
<accession>P95337</accession>
<dbReference type="EC" id="1.1.1.25" evidence="1"/>
<dbReference type="EMBL" id="U82845">
    <property type="protein sequence ID" value="AAC44916.1"/>
    <property type="molecule type" value="Genomic_DNA"/>
</dbReference>
<dbReference type="SMR" id="P95337"/>
<dbReference type="UniPathway" id="UPA00053">
    <property type="reaction ID" value="UER00087"/>
</dbReference>
<dbReference type="GO" id="GO:0005829">
    <property type="term" value="C:cytosol"/>
    <property type="evidence" value="ECO:0007669"/>
    <property type="project" value="TreeGrafter"/>
</dbReference>
<dbReference type="GO" id="GO:0050661">
    <property type="term" value="F:NADP binding"/>
    <property type="evidence" value="ECO:0007669"/>
    <property type="project" value="InterPro"/>
</dbReference>
<dbReference type="GO" id="GO:0004764">
    <property type="term" value="F:shikimate 3-dehydrogenase (NADP+) activity"/>
    <property type="evidence" value="ECO:0007669"/>
    <property type="project" value="UniProtKB-UniRule"/>
</dbReference>
<dbReference type="GO" id="GO:0008652">
    <property type="term" value="P:amino acid biosynthetic process"/>
    <property type="evidence" value="ECO:0007669"/>
    <property type="project" value="UniProtKB-KW"/>
</dbReference>
<dbReference type="GO" id="GO:0009073">
    <property type="term" value="P:aromatic amino acid family biosynthetic process"/>
    <property type="evidence" value="ECO:0007669"/>
    <property type="project" value="UniProtKB-KW"/>
</dbReference>
<dbReference type="GO" id="GO:0009423">
    <property type="term" value="P:chorismate biosynthetic process"/>
    <property type="evidence" value="ECO:0007669"/>
    <property type="project" value="UniProtKB-UniRule"/>
</dbReference>
<dbReference type="GO" id="GO:0019632">
    <property type="term" value="P:shikimate metabolic process"/>
    <property type="evidence" value="ECO:0007669"/>
    <property type="project" value="InterPro"/>
</dbReference>
<dbReference type="CDD" id="cd01065">
    <property type="entry name" value="NAD_bind_Shikimate_DH"/>
    <property type="match status" value="1"/>
</dbReference>
<dbReference type="FunFam" id="3.40.50.10860:FF:000006">
    <property type="entry name" value="Shikimate dehydrogenase (NADP(+))"/>
    <property type="match status" value="1"/>
</dbReference>
<dbReference type="Gene3D" id="3.40.50.10860">
    <property type="entry name" value="Leucine Dehydrogenase, chain A, domain 1"/>
    <property type="match status" value="1"/>
</dbReference>
<dbReference type="Gene3D" id="3.40.50.720">
    <property type="entry name" value="NAD(P)-binding Rossmann-like Domain"/>
    <property type="match status" value="1"/>
</dbReference>
<dbReference type="HAMAP" id="MF_00222">
    <property type="entry name" value="Shikimate_DH_AroE"/>
    <property type="match status" value="1"/>
</dbReference>
<dbReference type="InterPro" id="IPR046346">
    <property type="entry name" value="Aminoacid_DH-like_N_sf"/>
</dbReference>
<dbReference type="InterPro" id="IPR036291">
    <property type="entry name" value="NAD(P)-bd_dom_sf"/>
</dbReference>
<dbReference type="InterPro" id="IPR041121">
    <property type="entry name" value="SDH_C"/>
</dbReference>
<dbReference type="InterPro" id="IPR011342">
    <property type="entry name" value="Shikimate_DH"/>
</dbReference>
<dbReference type="InterPro" id="IPR013708">
    <property type="entry name" value="Shikimate_DH-bd_N"/>
</dbReference>
<dbReference type="InterPro" id="IPR022893">
    <property type="entry name" value="Shikimate_DH_fam"/>
</dbReference>
<dbReference type="InterPro" id="IPR006151">
    <property type="entry name" value="Shikm_DH/Glu-tRNA_Rdtase"/>
</dbReference>
<dbReference type="NCBIfam" id="TIGR00507">
    <property type="entry name" value="aroE"/>
    <property type="match status" value="1"/>
</dbReference>
<dbReference type="NCBIfam" id="NF001310">
    <property type="entry name" value="PRK00258.1-2"/>
    <property type="match status" value="1"/>
</dbReference>
<dbReference type="PANTHER" id="PTHR21089:SF1">
    <property type="entry name" value="BIFUNCTIONAL 3-DEHYDROQUINATE DEHYDRATASE_SHIKIMATE DEHYDROGENASE, CHLOROPLASTIC"/>
    <property type="match status" value="1"/>
</dbReference>
<dbReference type="PANTHER" id="PTHR21089">
    <property type="entry name" value="SHIKIMATE DEHYDROGENASE"/>
    <property type="match status" value="1"/>
</dbReference>
<dbReference type="Pfam" id="PF18317">
    <property type="entry name" value="SDH_C"/>
    <property type="match status" value="1"/>
</dbReference>
<dbReference type="Pfam" id="PF01488">
    <property type="entry name" value="Shikimate_DH"/>
    <property type="match status" value="1"/>
</dbReference>
<dbReference type="Pfam" id="PF08501">
    <property type="entry name" value="Shikimate_dh_N"/>
    <property type="match status" value="1"/>
</dbReference>
<dbReference type="SUPFAM" id="SSF53223">
    <property type="entry name" value="Aminoacid dehydrogenase-like, N-terminal domain"/>
    <property type="match status" value="1"/>
</dbReference>
<dbReference type="SUPFAM" id="SSF51735">
    <property type="entry name" value="NAD(P)-binding Rossmann-fold domains"/>
    <property type="match status" value="1"/>
</dbReference>
<sequence>MTTISRYTVFGNPVAHSKSPQIHQQFALQEGVDIEYGRICADIGGFAQAVSIFFETGGCGANVTVPFKQEAFALADEYSERASAAGAVNTLILLENGKLRGDNTDGIGLSNDITQVKNIAIECKTILLLGAGGAVRGVIPVLKEHRPARIVIANRTHAKAEELARLFGIEAVPMADLNGGFDIIINGTSGSLSGQLPAVSPEIFRNCRLAYDMVYGDAAQAFLNFAQSNGAAEVSDGLGMLVGQAAASYSLWRGFTPDIRPVIEYMKAL</sequence>
<name>AROE_NEICI</name>
<protein>
    <recommendedName>
        <fullName evidence="1">Shikimate dehydrogenase (NADP(+))</fullName>
        <shortName evidence="1">SDH</shortName>
        <ecNumber evidence="1">1.1.1.25</ecNumber>
    </recommendedName>
</protein>
<feature type="chain" id="PRO_0000136015" description="Shikimate dehydrogenase (NADP(+))">
    <location>
        <begin position="1"/>
        <end position="269"/>
    </location>
</feature>
<feature type="active site" description="Proton acceptor" evidence="1">
    <location>
        <position position="68"/>
    </location>
</feature>
<feature type="binding site" evidence="1">
    <location>
        <begin position="17"/>
        <end position="19"/>
    </location>
    <ligand>
        <name>shikimate</name>
        <dbReference type="ChEBI" id="CHEBI:36208"/>
    </ligand>
</feature>
<feature type="binding site" evidence="1">
    <location>
        <position position="64"/>
    </location>
    <ligand>
        <name>shikimate</name>
        <dbReference type="ChEBI" id="CHEBI:36208"/>
    </ligand>
</feature>
<feature type="binding site" evidence="1">
    <location>
        <position position="80"/>
    </location>
    <ligand>
        <name>NADP(+)</name>
        <dbReference type="ChEBI" id="CHEBI:58349"/>
    </ligand>
</feature>
<feature type="binding site" evidence="1">
    <location>
        <position position="89"/>
    </location>
    <ligand>
        <name>shikimate</name>
        <dbReference type="ChEBI" id="CHEBI:36208"/>
    </ligand>
</feature>
<feature type="binding site" evidence="1">
    <location>
        <position position="105"/>
    </location>
    <ligand>
        <name>shikimate</name>
        <dbReference type="ChEBI" id="CHEBI:36208"/>
    </ligand>
</feature>
<feature type="binding site" evidence="1">
    <location>
        <begin position="130"/>
        <end position="134"/>
    </location>
    <ligand>
        <name>NADP(+)</name>
        <dbReference type="ChEBI" id="CHEBI:58349"/>
    </ligand>
</feature>
<feature type="binding site" evidence="1">
    <location>
        <begin position="154"/>
        <end position="159"/>
    </location>
    <ligand>
        <name>NADP(+)</name>
        <dbReference type="ChEBI" id="CHEBI:58349"/>
    </ligand>
</feature>
<feature type="binding site" evidence="1">
    <location>
        <position position="213"/>
    </location>
    <ligand>
        <name>NADP(+)</name>
        <dbReference type="ChEBI" id="CHEBI:58349"/>
    </ligand>
</feature>
<feature type="binding site" evidence="1">
    <location>
        <position position="215"/>
    </location>
    <ligand>
        <name>shikimate</name>
        <dbReference type="ChEBI" id="CHEBI:36208"/>
    </ligand>
</feature>
<feature type="binding site" evidence="1">
    <location>
        <position position="237"/>
    </location>
    <ligand>
        <name>NADP(+)</name>
        <dbReference type="ChEBI" id="CHEBI:58349"/>
    </ligand>
</feature>
<keyword id="KW-0028">Amino-acid biosynthesis</keyword>
<keyword id="KW-0057">Aromatic amino acid biosynthesis</keyword>
<keyword id="KW-0521">NADP</keyword>
<keyword id="KW-0560">Oxidoreductase</keyword>
<evidence type="ECO:0000255" key="1">
    <source>
        <dbReference type="HAMAP-Rule" id="MF_00222"/>
    </source>
</evidence>